<organism>
    <name type="scientific">Staphylococcus haemolyticus (strain JCSC1435)</name>
    <dbReference type="NCBI Taxonomy" id="279808"/>
    <lineage>
        <taxon>Bacteria</taxon>
        <taxon>Bacillati</taxon>
        <taxon>Bacillota</taxon>
        <taxon>Bacilli</taxon>
        <taxon>Bacillales</taxon>
        <taxon>Staphylococcaceae</taxon>
        <taxon>Staphylococcus</taxon>
    </lineage>
</organism>
<dbReference type="EMBL" id="AP006716">
    <property type="protein sequence ID" value="BAE05935.1"/>
    <property type="molecule type" value="Genomic_DNA"/>
</dbReference>
<dbReference type="RefSeq" id="WP_002447994.1">
    <property type="nucleotide sequence ID" value="NC_007168.1"/>
</dbReference>
<dbReference type="SMR" id="Q4L342"/>
<dbReference type="GeneID" id="93781865"/>
<dbReference type="KEGG" id="sha:SH2626"/>
<dbReference type="eggNOG" id="COG0238">
    <property type="taxonomic scope" value="Bacteria"/>
</dbReference>
<dbReference type="HOGENOM" id="CLU_148710_2_2_9"/>
<dbReference type="OrthoDB" id="9812008at2"/>
<dbReference type="Proteomes" id="UP000000543">
    <property type="component" value="Chromosome"/>
</dbReference>
<dbReference type="GO" id="GO:0022627">
    <property type="term" value="C:cytosolic small ribosomal subunit"/>
    <property type="evidence" value="ECO:0007669"/>
    <property type="project" value="TreeGrafter"/>
</dbReference>
<dbReference type="GO" id="GO:0070181">
    <property type="term" value="F:small ribosomal subunit rRNA binding"/>
    <property type="evidence" value="ECO:0007669"/>
    <property type="project" value="TreeGrafter"/>
</dbReference>
<dbReference type="GO" id="GO:0003735">
    <property type="term" value="F:structural constituent of ribosome"/>
    <property type="evidence" value="ECO:0007669"/>
    <property type="project" value="InterPro"/>
</dbReference>
<dbReference type="GO" id="GO:0006412">
    <property type="term" value="P:translation"/>
    <property type="evidence" value="ECO:0007669"/>
    <property type="project" value="UniProtKB-UniRule"/>
</dbReference>
<dbReference type="FunFam" id="4.10.640.10:FF:000003">
    <property type="entry name" value="30S ribosomal protein S18"/>
    <property type="match status" value="1"/>
</dbReference>
<dbReference type="Gene3D" id="4.10.640.10">
    <property type="entry name" value="Ribosomal protein S18"/>
    <property type="match status" value="1"/>
</dbReference>
<dbReference type="HAMAP" id="MF_00270">
    <property type="entry name" value="Ribosomal_bS18"/>
    <property type="match status" value="1"/>
</dbReference>
<dbReference type="InterPro" id="IPR001648">
    <property type="entry name" value="Ribosomal_bS18"/>
</dbReference>
<dbReference type="InterPro" id="IPR018275">
    <property type="entry name" value="Ribosomal_bS18_CS"/>
</dbReference>
<dbReference type="InterPro" id="IPR036870">
    <property type="entry name" value="Ribosomal_bS18_sf"/>
</dbReference>
<dbReference type="NCBIfam" id="TIGR00165">
    <property type="entry name" value="S18"/>
    <property type="match status" value="1"/>
</dbReference>
<dbReference type="PANTHER" id="PTHR13479">
    <property type="entry name" value="30S RIBOSOMAL PROTEIN S18"/>
    <property type="match status" value="1"/>
</dbReference>
<dbReference type="PANTHER" id="PTHR13479:SF40">
    <property type="entry name" value="SMALL RIBOSOMAL SUBUNIT PROTEIN BS18M"/>
    <property type="match status" value="1"/>
</dbReference>
<dbReference type="Pfam" id="PF01084">
    <property type="entry name" value="Ribosomal_S18"/>
    <property type="match status" value="1"/>
</dbReference>
<dbReference type="PRINTS" id="PR00974">
    <property type="entry name" value="RIBOSOMALS18"/>
</dbReference>
<dbReference type="SUPFAM" id="SSF46911">
    <property type="entry name" value="Ribosomal protein S18"/>
    <property type="match status" value="1"/>
</dbReference>
<dbReference type="PROSITE" id="PS00057">
    <property type="entry name" value="RIBOSOMAL_S18"/>
    <property type="match status" value="1"/>
</dbReference>
<gene>
    <name evidence="1" type="primary">rpsR</name>
    <name type="ordered locus">SH2626</name>
</gene>
<accession>Q4L342</accession>
<evidence type="ECO:0000255" key="1">
    <source>
        <dbReference type="HAMAP-Rule" id="MF_00270"/>
    </source>
</evidence>
<evidence type="ECO:0000305" key="2"/>
<feature type="chain" id="PRO_1000003622" description="Small ribosomal subunit protein bS18">
    <location>
        <begin position="1"/>
        <end position="80"/>
    </location>
</feature>
<name>RS18_STAHJ</name>
<proteinExistence type="inferred from homology"/>
<comment type="function">
    <text evidence="1">Binds as a heterodimer with protein bS6 to the central domain of the 16S rRNA, where it helps stabilize the platform of the 30S subunit.</text>
</comment>
<comment type="subunit">
    <text evidence="1">Part of the 30S ribosomal subunit. Forms a tight heterodimer with protein bS6.</text>
</comment>
<comment type="similarity">
    <text evidence="1">Belongs to the bacterial ribosomal protein bS18 family.</text>
</comment>
<keyword id="KW-0687">Ribonucleoprotein</keyword>
<keyword id="KW-0689">Ribosomal protein</keyword>
<keyword id="KW-0694">RNA-binding</keyword>
<keyword id="KW-0699">rRNA-binding</keyword>
<sequence>MAGGPRRGGRRRKKVCYFTANGITHIDYKDTELLKRFISERGKILPRRVTGTSAKYQRMLTTAIKRARHMALLPYVKDEN</sequence>
<reference key="1">
    <citation type="journal article" date="2005" name="J. Bacteriol.">
        <title>Whole-genome sequencing of Staphylococcus haemolyticus uncovers the extreme plasticity of its genome and the evolution of human-colonizing staphylococcal species.</title>
        <authorList>
            <person name="Takeuchi F."/>
            <person name="Watanabe S."/>
            <person name="Baba T."/>
            <person name="Yuzawa H."/>
            <person name="Ito T."/>
            <person name="Morimoto Y."/>
            <person name="Kuroda M."/>
            <person name="Cui L."/>
            <person name="Takahashi M."/>
            <person name="Ankai A."/>
            <person name="Baba S."/>
            <person name="Fukui S."/>
            <person name="Lee J.C."/>
            <person name="Hiramatsu K."/>
        </authorList>
    </citation>
    <scope>NUCLEOTIDE SEQUENCE [LARGE SCALE GENOMIC DNA]</scope>
    <source>
        <strain>JCSC1435</strain>
    </source>
</reference>
<protein>
    <recommendedName>
        <fullName evidence="1">Small ribosomal subunit protein bS18</fullName>
    </recommendedName>
    <alternativeName>
        <fullName evidence="2">30S ribosomal protein S18</fullName>
    </alternativeName>
</protein>